<proteinExistence type="inferred from homology"/>
<protein>
    <recommendedName>
        <fullName evidence="1">3-isopropylmalate dehydrogenase</fullName>
        <ecNumber evidence="1">1.1.1.85</ecNumber>
    </recommendedName>
    <alternativeName>
        <fullName evidence="1">3-IPM-DH</fullName>
    </alternativeName>
    <alternativeName>
        <fullName evidence="1">Beta-IPM dehydrogenase</fullName>
        <shortName evidence="1">IMDH</shortName>
    </alternativeName>
</protein>
<reference key="1">
    <citation type="journal article" date="2007" name="ISME J.">
        <title>Population level functional diversity in a microbial community revealed by comparative genomic and metagenomic analyses.</title>
        <authorList>
            <person name="Bhaya D."/>
            <person name="Grossman A.R."/>
            <person name="Steunou A.-S."/>
            <person name="Khuri N."/>
            <person name="Cohan F.M."/>
            <person name="Hamamura N."/>
            <person name="Melendrez M.C."/>
            <person name="Bateson M.M."/>
            <person name="Ward D.M."/>
            <person name="Heidelberg J.F."/>
        </authorList>
    </citation>
    <scope>NUCLEOTIDE SEQUENCE [LARGE SCALE GENOMIC DNA]</scope>
    <source>
        <strain>JA-2-3B'a(2-13)</strain>
    </source>
</reference>
<accession>Q2JL30</accession>
<name>LEU3_SYNJB</name>
<dbReference type="EC" id="1.1.1.85" evidence="1"/>
<dbReference type="EMBL" id="CP000240">
    <property type="protein sequence ID" value="ABD02592.1"/>
    <property type="molecule type" value="Genomic_DNA"/>
</dbReference>
<dbReference type="RefSeq" id="WP_011433237.1">
    <property type="nucleotide sequence ID" value="NC_007776.1"/>
</dbReference>
<dbReference type="SMR" id="Q2JL30"/>
<dbReference type="STRING" id="321332.CYB_1631"/>
<dbReference type="KEGG" id="cyb:CYB_1631"/>
<dbReference type="eggNOG" id="COG0473">
    <property type="taxonomic scope" value="Bacteria"/>
</dbReference>
<dbReference type="HOGENOM" id="CLU_031953_0_3_3"/>
<dbReference type="OrthoDB" id="9806254at2"/>
<dbReference type="UniPathway" id="UPA00048">
    <property type="reaction ID" value="UER00072"/>
</dbReference>
<dbReference type="Proteomes" id="UP000001938">
    <property type="component" value="Chromosome"/>
</dbReference>
<dbReference type="GO" id="GO:0005829">
    <property type="term" value="C:cytosol"/>
    <property type="evidence" value="ECO:0007669"/>
    <property type="project" value="TreeGrafter"/>
</dbReference>
<dbReference type="GO" id="GO:0003862">
    <property type="term" value="F:3-isopropylmalate dehydrogenase activity"/>
    <property type="evidence" value="ECO:0007669"/>
    <property type="project" value="UniProtKB-UniRule"/>
</dbReference>
<dbReference type="GO" id="GO:0000287">
    <property type="term" value="F:magnesium ion binding"/>
    <property type="evidence" value="ECO:0007669"/>
    <property type="project" value="InterPro"/>
</dbReference>
<dbReference type="GO" id="GO:0051287">
    <property type="term" value="F:NAD binding"/>
    <property type="evidence" value="ECO:0007669"/>
    <property type="project" value="InterPro"/>
</dbReference>
<dbReference type="GO" id="GO:0009098">
    <property type="term" value="P:L-leucine biosynthetic process"/>
    <property type="evidence" value="ECO:0007669"/>
    <property type="project" value="UniProtKB-UniRule"/>
</dbReference>
<dbReference type="FunFam" id="3.40.718.10:FF:000028">
    <property type="entry name" value="3-isopropylmalate dehydrogenase"/>
    <property type="match status" value="1"/>
</dbReference>
<dbReference type="Gene3D" id="3.40.718.10">
    <property type="entry name" value="Isopropylmalate Dehydrogenase"/>
    <property type="match status" value="1"/>
</dbReference>
<dbReference type="HAMAP" id="MF_01033">
    <property type="entry name" value="LeuB_type1"/>
    <property type="match status" value="1"/>
</dbReference>
<dbReference type="InterPro" id="IPR019818">
    <property type="entry name" value="IsoCit/isopropylmalate_DH_CS"/>
</dbReference>
<dbReference type="InterPro" id="IPR024084">
    <property type="entry name" value="IsoPropMal-DH-like_dom"/>
</dbReference>
<dbReference type="InterPro" id="IPR004429">
    <property type="entry name" value="Isopropylmalate_DH"/>
</dbReference>
<dbReference type="NCBIfam" id="TIGR00169">
    <property type="entry name" value="leuB"/>
    <property type="match status" value="1"/>
</dbReference>
<dbReference type="PANTHER" id="PTHR42979">
    <property type="entry name" value="3-ISOPROPYLMALATE DEHYDROGENASE"/>
    <property type="match status" value="1"/>
</dbReference>
<dbReference type="PANTHER" id="PTHR42979:SF1">
    <property type="entry name" value="3-ISOPROPYLMALATE DEHYDROGENASE"/>
    <property type="match status" value="1"/>
</dbReference>
<dbReference type="Pfam" id="PF00180">
    <property type="entry name" value="Iso_dh"/>
    <property type="match status" value="1"/>
</dbReference>
<dbReference type="SMART" id="SM01329">
    <property type="entry name" value="Iso_dh"/>
    <property type="match status" value="1"/>
</dbReference>
<dbReference type="SUPFAM" id="SSF53659">
    <property type="entry name" value="Isocitrate/Isopropylmalate dehydrogenase-like"/>
    <property type="match status" value="1"/>
</dbReference>
<dbReference type="PROSITE" id="PS00470">
    <property type="entry name" value="IDH_IMDH"/>
    <property type="match status" value="1"/>
</dbReference>
<gene>
    <name evidence="1" type="primary">leuB</name>
    <name type="ordered locus">CYB_1631</name>
</gene>
<organism>
    <name type="scientific">Synechococcus sp. (strain JA-2-3B'a(2-13))</name>
    <name type="common">Cyanobacteria bacterium Yellowstone B-Prime</name>
    <dbReference type="NCBI Taxonomy" id="321332"/>
    <lineage>
        <taxon>Bacteria</taxon>
        <taxon>Bacillati</taxon>
        <taxon>Cyanobacteriota</taxon>
        <taxon>Cyanophyceae</taxon>
        <taxon>Synechococcales</taxon>
        <taxon>Synechococcaceae</taxon>
        <taxon>Synechococcus</taxon>
    </lineage>
</organism>
<feature type="chain" id="PRO_0000250144" description="3-isopropylmalate dehydrogenase">
    <location>
        <begin position="1"/>
        <end position="371"/>
    </location>
</feature>
<feature type="binding site" evidence="1">
    <location>
        <position position="104"/>
    </location>
    <ligand>
        <name>substrate</name>
    </ligand>
</feature>
<feature type="binding site" evidence="1">
    <location>
        <position position="114"/>
    </location>
    <ligand>
        <name>substrate</name>
    </ligand>
</feature>
<feature type="binding site" evidence="1">
    <location>
        <position position="142"/>
    </location>
    <ligand>
        <name>substrate</name>
    </ligand>
</feature>
<feature type="binding site" evidence="1">
    <location>
        <position position="232"/>
    </location>
    <ligand>
        <name>Mg(2+)</name>
        <dbReference type="ChEBI" id="CHEBI:18420"/>
    </ligand>
</feature>
<feature type="binding site" evidence="1">
    <location>
        <position position="232"/>
    </location>
    <ligand>
        <name>substrate</name>
    </ligand>
</feature>
<feature type="binding site" evidence="1">
    <location>
        <position position="256"/>
    </location>
    <ligand>
        <name>Mg(2+)</name>
        <dbReference type="ChEBI" id="CHEBI:18420"/>
    </ligand>
</feature>
<feature type="binding site" evidence="1">
    <location>
        <position position="260"/>
    </location>
    <ligand>
        <name>Mg(2+)</name>
        <dbReference type="ChEBI" id="CHEBI:18420"/>
    </ligand>
</feature>
<feature type="binding site" evidence="1">
    <location>
        <begin position="290"/>
        <end position="302"/>
    </location>
    <ligand>
        <name>NAD(+)</name>
        <dbReference type="ChEBI" id="CHEBI:57540"/>
    </ligand>
</feature>
<feature type="site" description="Important for catalysis" evidence="1">
    <location>
        <position position="149"/>
    </location>
</feature>
<feature type="site" description="Important for catalysis" evidence="1">
    <location>
        <position position="200"/>
    </location>
</feature>
<evidence type="ECO:0000255" key="1">
    <source>
        <dbReference type="HAMAP-Rule" id="MF_01033"/>
    </source>
</evidence>
<comment type="function">
    <text evidence="1">Catalyzes the oxidation of 3-carboxy-2-hydroxy-4-methylpentanoate (3-isopropylmalate) to 3-carboxy-4-methyl-2-oxopentanoate. The product decarboxylates to 4-methyl-2 oxopentanoate.</text>
</comment>
<comment type="catalytic activity">
    <reaction evidence="1">
        <text>(2R,3S)-3-isopropylmalate + NAD(+) = 4-methyl-2-oxopentanoate + CO2 + NADH</text>
        <dbReference type="Rhea" id="RHEA:32271"/>
        <dbReference type="ChEBI" id="CHEBI:16526"/>
        <dbReference type="ChEBI" id="CHEBI:17865"/>
        <dbReference type="ChEBI" id="CHEBI:35121"/>
        <dbReference type="ChEBI" id="CHEBI:57540"/>
        <dbReference type="ChEBI" id="CHEBI:57945"/>
        <dbReference type="EC" id="1.1.1.85"/>
    </reaction>
</comment>
<comment type="cofactor">
    <cofactor evidence="1">
        <name>Mg(2+)</name>
        <dbReference type="ChEBI" id="CHEBI:18420"/>
    </cofactor>
    <cofactor evidence="1">
        <name>Mn(2+)</name>
        <dbReference type="ChEBI" id="CHEBI:29035"/>
    </cofactor>
    <text evidence="1">Binds 1 Mg(2+) or Mn(2+) ion per subunit.</text>
</comment>
<comment type="pathway">
    <text evidence="1">Amino-acid biosynthesis; L-leucine biosynthesis; L-leucine from 3-methyl-2-oxobutanoate: step 3/4.</text>
</comment>
<comment type="subunit">
    <text evidence="1">Homodimer.</text>
</comment>
<comment type="subcellular location">
    <subcellularLocation>
        <location evidence="1">Cytoplasm</location>
    </subcellularLocation>
</comment>
<comment type="similarity">
    <text evidence="1">Belongs to the isocitrate and isopropylmalate dehydrogenases family. LeuB type 1 subfamily.</text>
</comment>
<sequence>MSTSSSTARTYRITALAGDGIGPEIMRVGRAVLDAVARQMGFALQWQEGLIGGAAYDQTGDPLPAETLKMAQESDAVYLAAVGDFKYDALPPEKRPERALLGLRAGLGLFANLRPVKVFPQLVGASSLKPEVIAGIDLVVVRELTGGIYFGQPKGIFTDAQGSRRGVNTMVYSEAEVDRIARVAFELARKRRRKLCSVDKANVLEVSQLWRERVNAIAAEYPEVELSHLYIDNAAMQLVRWPKQFDVILTGNLFGDILSDEAAMLTGSIGMLPSASLGSSGPGLYEPVHGSAPDIAGQDKANPIAQVLSGALMLRYSLDQPQAADRIEQAVEAVLAQGYRTPDLYSEGMTLVGCQEMGEKLVAALSQQQAQ</sequence>
<keyword id="KW-0028">Amino-acid biosynthesis</keyword>
<keyword id="KW-0100">Branched-chain amino acid biosynthesis</keyword>
<keyword id="KW-0963">Cytoplasm</keyword>
<keyword id="KW-0432">Leucine biosynthesis</keyword>
<keyword id="KW-0460">Magnesium</keyword>
<keyword id="KW-0464">Manganese</keyword>
<keyword id="KW-0479">Metal-binding</keyword>
<keyword id="KW-0520">NAD</keyword>
<keyword id="KW-0560">Oxidoreductase</keyword>
<keyword id="KW-1185">Reference proteome</keyword>